<name>RL9_STRR6</name>
<comment type="function">
    <text evidence="1">Binds to the 23S rRNA.</text>
</comment>
<comment type="similarity">
    <text evidence="1">Belongs to the bacterial ribosomal protein bL9 family.</text>
</comment>
<dbReference type="EMBL" id="AE007317">
    <property type="protein sequence ID" value="AAL00811.1"/>
    <property type="molecule type" value="Genomic_DNA"/>
</dbReference>
<dbReference type="PIR" id="F98122">
    <property type="entry name" value="F98122"/>
</dbReference>
<dbReference type="RefSeq" id="NP_359600.1">
    <property type="nucleotide sequence ID" value="NC_003098.1"/>
</dbReference>
<dbReference type="RefSeq" id="WP_000864220.1">
    <property type="nucleotide sequence ID" value="NC_003098.1"/>
</dbReference>
<dbReference type="SMR" id="P66321"/>
<dbReference type="STRING" id="171101.spr2009"/>
<dbReference type="GeneID" id="45652575"/>
<dbReference type="KEGG" id="spr:spr2009"/>
<dbReference type="PATRIC" id="fig|171101.6.peg.2174"/>
<dbReference type="eggNOG" id="COG0359">
    <property type="taxonomic scope" value="Bacteria"/>
</dbReference>
<dbReference type="HOGENOM" id="CLU_078938_3_2_9"/>
<dbReference type="PRO" id="PR:P66321"/>
<dbReference type="Proteomes" id="UP000000586">
    <property type="component" value="Chromosome"/>
</dbReference>
<dbReference type="GO" id="GO:0022625">
    <property type="term" value="C:cytosolic large ribosomal subunit"/>
    <property type="evidence" value="ECO:0000318"/>
    <property type="project" value="GO_Central"/>
</dbReference>
<dbReference type="GO" id="GO:0019843">
    <property type="term" value="F:rRNA binding"/>
    <property type="evidence" value="ECO:0007669"/>
    <property type="project" value="UniProtKB-UniRule"/>
</dbReference>
<dbReference type="GO" id="GO:0003735">
    <property type="term" value="F:structural constituent of ribosome"/>
    <property type="evidence" value="ECO:0007669"/>
    <property type="project" value="InterPro"/>
</dbReference>
<dbReference type="GO" id="GO:0006412">
    <property type="term" value="P:translation"/>
    <property type="evidence" value="ECO:0007669"/>
    <property type="project" value="UniProtKB-UniRule"/>
</dbReference>
<dbReference type="FunFam" id="3.10.430.100:FF:000009">
    <property type="entry name" value="50S ribosomal protein L9"/>
    <property type="match status" value="1"/>
</dbReference>
<dbReference type="FunFam" id="3.40.5.10:FF:000002">
    <property type="entry name" value="50S ribosomal protein L9"/>
    <property type="match status" value="1"/>
</dbReference>
<dbReference type="Gene3D" id="3.10.430.100">
    <property type="entry name" value="Ribosomal protein L9, C-terminal domain"/>
    <property type="match status" value="1"/>
</dbReference>
<dbReference type="Gene3D" id="3.40.5.10">
    <property type="entry name" value="Ribosomal protein L9, N-terminal domain"/>
    <property type="match status" value="1"/>
</dbReference>
<dbReference type="HAMAP" id="MF_00503">
    <property type="entry name" value="Ribosomal_bL9"/>
    <property type="match status" value="1"/>
</dbReference>
<dbReference type="InterPro" id="IPR000244">
    <property type="entry name" value="Ribosomal_bL9"/>
</dbReference>
<dbReference type="InterPro" id="IPR009027">
    <property type="entry name" value="Ribosomal_bL9/RNase_H1_N"/>
</dbReference>
<dbReference type="InterPro" id="IPR020594">
    <property type="entry name" value="Ribosomal_bL9_bac/chp"/>
</dbReference>
<dbReference type="InterPro" id="IPR020069">
    <property type="entry name" value="Ribosomal_bL9_C"/>
</dbReference>
<dbReference type="InterPro" id="IPR036791">
    <property type="entry name" value="Ribosomal_bL9_C_sf"/>
</dbReference>
<dbReference type="InterPro" id="IPR020070">
    <property type="entry name" value="Ribosomal_bL9_N"/>
</dbReference>
<dbReference type="InterPro" id="IPR036935">
    <property type="entry name" value="Ribosomal_bL9_N_sf"/>
</dbReference>
<dbReference type="NCBIfam" id="TIGR00158">
    <property type="entry name" value="L9"/>
    <property type="match status" value="1"/>
</dbReference>
<dbReference type="PANTHER" id="PTHR21368">
    <property type="entry name" value="50S RIBOSOMAL PROTEIN L9"/>
    <property type="match status" value="1"/>
</dbReference>
<dbReference type="Pfam" id="PF03948">
    <property type="entry name" value="Ribosomal_L9_C"/>
    <property type="match status" value="1"/>
</dbReference>
<dbReference type="Pfam" id="PF01281">
    <property type="entry name" value="Ribosomal_L9_N"/>
    <property type="match status" value="1"/>
</dbReference>
<dbReference type="SUPFAM" id="SSF55658">
    <property type="entry name" value="L9 N-domain-like"/>
    <property type="match status" value="1"/>
</dbReference>
<dbReference type="SUPFAM" id="SSF55653">
    <property type="entry name" value="Ribosomal protein L9 C-domain"/>
    <property type="match status" value="1"/>
</dbReference>
<dbReference type="PROSITE" id="PS00651">
    <property type="entry name" value="RIBOSOMAL_L9"/>
    <property type="match status" value="1"/>
</dbReference>
<reference key="1">
    <citation type="journal article" date="2001" name="J. Bacteriol.">
        <title>Genome of the bacterium Streptococcus pneumoniae strain R6.</title>
        <authorList>
            <person name="Hoskins J."/>
            <person name="Alborn W.E. Jr."/>
            <person name="Arnold J."/>
            <person name="Blaszczak L.C."/>
            <person name="Burgett S."/>
            <person name="DeHoff B.S."/>
            <person name="Estrem S.T."/>
            <person name="Fritz L."/>
            <person name="Fu D.-J."/>
            <person name="Fuller W."/>
            <person name="Geringer C."/>
            <person name="Gilmour R."/>
            <person name="Glass J.S."/>
            <person name="Khoja H."/>
            <person name="Kraft A.R."/>
            <person name="Lagace R.E."/>
            <person name="LeBlanc D.J."/>
            <person name="Lee L.N."/>
            <person name="Lefkowitz E.J."/>
            <person name="Lu J."/>
            <person name="Matsushima P."/>
            <person name="McAhren S.M."/>
            <person name="McHenney M."/>
            <person name="McLeaster K."/>
            <person name="Mundy C.W."/>
            <person name="Nicas T.I."/>
            <person name="Norris F.H."/>
            <person name="O'Gara M."/>
            <person name="Peery R.B."/>
            <person name="Robertson G.T."/>
            <person name="Rockey P."/>
            <person name="Sun P.-M."/>
            <person name="Winkler M.E."/>
            <person name="Yang Y."/>
            <person name="Young-Bellido M."/>
            <person name="Zhao G."/>
            <person name="Zook C.A."/>
            <person name="Baltz R.H."/>
            <person name="Jaskunas S.R."/>
            <person name="Rosteck P.R. Jr."/>
            <person name="Skatrud P.L."/>
            <person name="Glass J.I."/>
        </authorList>
    </citation>
    <scope>NUCLEOTIDE SEQUENCE [LARGE SCALE GENOMIC DNA]</scope>
    <source>
        <strain>ATCC BAA-255 / R6</strain>
    </source>
</reference>
<proteinExistence type="inferred from homology"/>
<keyword id="KW-1185">Reference proteome</keyword>
<keyword id="KW-0687">Ribonucleoprotein</keyword>
<keyword id="KW-0689">Ribosomal protein</keyword>
<keyword id="KW-0694">RNA-binding</keyword>
<keyword id="KW-0699">rRNA-binding</keyword>
<gene>
    <name evidence="1" type="primary">rplI</name>
    <name type="ordered locus">spr2009</name>
</gene>
<feature type="chain" id="PRO_0000176687" description="Large ribosomal subunit protein bL9">
    <location>
        <begin position="1"/>
        <end position="150"/>
    </location>
</feature>
<protein>
    <recommendedName>
        <fullName evidence="1">Large ribosomal subunit protein bL9</fullName>
    </recommendedName>
    <alternativeName>
        <fullName evidence="2">50S ribosomal protein L9</fullName>
    </alternativeName>
</protein>
<evidence type="ECO:0000255" key="1">
    <source>
        <dbReference type="HAMAP-Rule" id="MF_00503"/>
    </source>
</evidence>
<evidence type="ECO:0000305" key="2"/>
<sequence length="150" mass="16523">MKVIFLADVKGKGKKGEIKEVPTGYAQNFLIKKNLAKEATAQAVGELRGKQKSEEKAHAEMIAEGKAIKAQLEAEETVVEFVEKVGPDGRTFGSITNKKIAEELQKQFGIKIDKRHIQVQAPIRAVGLIDVPVKIYQDITSVINLRVKEG</sequence>
<organism>
    <name type="scientific">Streptococcus pneumoniae (strain ATCC BAA-255 / R6)</name>
    <dbReference type="NCBI Taxonomy" id="171101"/>
    <lineage>
        <taxon>Bacteria</taxon>
        <taxon>Bacillati</taxon>
        <taxon>Bacillota</taxon>
        <taxon>Bacilli</taxon>
        <taxon>Lactobacillales</taxon>
        <taxon>Streptococcaceae</taxon>
        <taxon>Streptococcus</taxon>
    </lineage>
</organism>
<accession>P66321</accession>
<accession>Q97N63</accession>